<comment type="function">
    <text evidence="1">Involved in the translocation of nascent protein chains into or through the endoplasmic reticulum (ER) membrane by facilitating the proper chain positioning at the SEC61 channel. Regulates the exposure of nascent secretory protein chain to the cytosol during translocation into the ER. May affect the phospholipid bilayer in the vicinity of the lateral gate of the SEC61 channel, thereby facilitating ER protein transport. Intimately associates with transmembrane (TM) domain of nascent membrane proteins during the entire integration process into the ER membrane. Associates with the second TM domain of G-protein-coupled receptor opsin/OPSD nascent chain in the ER membrane, which may facilitate its integration into the membrane. Under conditions of ER stress, participates in the disposal of misfolded ER membrane proteins during the unfolded protein response (UPR), an integrated stress response (ISR) pathway, by selectively retrotranslocating misfolded ER-membrane proteins from the ER into the cytosol where they are ubiquitinated and degraded by the proteasome.</text>
</comment>
<comment type="subunit">
    <text evidence="1">Interacts with SEC61B. May interact with Derlin-1/DERL1.</text>
</comment>
<comment type="subcellular location">
    <subcellularLocation>
        <location evidence="5">Endoplasmic reticulum membrane</location>
        <topology evidence="2">Multi-pass membrane protein</topology>
    </subcellularLocation>
</comment>
<comment type="PTM">
    <text evidence="1">N-glycosylated.</text>
</comment>
<comment type="similarity">
    <text evidence="6">Belongs to the TRAM family.</text>
</comment>
<sequence>MAIRKKSNKNPPLLSHEFLLQNHADIVSCLAMLFLLGLMFEVTAKGAIIFVALQYNVTRPATEEQATESASLYHYGIKDLATVLFYMLVAIIIHAIIQEYVLDKINRRMHFSKTKHSKFNESGQLSAFYLFACVWGTFILISENYISDPTILWRAYPHNLMTFQTKFFYISQLAYWLHAFPELYFQKTKKEDIPRQLVYIGLYLFHIAGAYLLNLNHLGLVLLVLHYFVEFLFHISRLFYFSDEKYQKGFSLWAVLFVLGRLLTLILSVLTVGFGLARAENQKLDFSTGNFNVLAVRIAVLASICITQAFMMWKFINFQLRRWREHSAFQAPPVKRKPAVTKGRSSRKGTENGVNGTVTSNGADSPRNRKEKSS</sequence>
<keyword id="KW-0256">Endoplasmic reticulum</keyword>
<keyword id="KW-0325">Glycoprotein</keyword>
<keyword id="KW-0472">Membrane</keyword>
<keyword id="KW-0597">Phosphoprotein</keyword>
<keyword id="KW-0653">Protein transport</keyword>
<keyword id="KW-1185">Reference proteome</keyword>
<keyword id="KW-0811">Translocation</keyword>
<keyword id="KW-0812">Transmembrane</keyword>
<keyword id="KW-1133">Transmembrane helix</keyword>
<keyword id="KW-0813">Transport</keyword>
<gene>
    <name evidence="8" type="primary">Tram1</name>
    <name evidence="1" type="synonym">Tram</name>
</gene>
<evidence type="ECO:0000250" key="1">
    <source>
        <dbReference type="UniProtKB" id="Q15629"/>
    </source>
</evidence>
<evidence type="ECO:0000255" key="2"/>
<evidence type="ECO:0000255" key="3">
    <source>
        <dbReference type="PROSITE-ProRule" id="PRU00205"/>
    </source>
</evidence>
<evidence type="ECO:0000256" key="4">
    <source>
        <dbReference type="SAM" id="MobiDB-lite"/>
    </source>
</evidence>
<evidence type="ECO:0000269" key="5">
    <source>
    </source>
</evidence>
<evidence type="ECO:0000305" key="6"/>
<evidence type="ECO:0000305" key="7">
    <source>
    </source>
</evidence>
<evidence type="ECO:0000312" key="8">
    <source>
        <dbReference type="MGI" id="MGI:1919515"/>
    </source>
</evidence>
<evidence type="ECO:0007744" key="9">
    <source>
    </source>
</evidence>
<evidence type="ECO:0007744" key="10">
    <source>
    </source>
</evidence>
<feature type="chain" id="PRO_0000185531" description="Translocating chain-associated membrane protein 1">
    <location>
        <begin position="1"/>
        <end position="374"/>
    </location>
</feature>
<feature type="topological domain" description="Cytoplasmic" evidence="7">
    <location>
        <begin position="1"/>
        <end position="29"/>
    </location>
</feature>
<feature type="transmembrane region" description="Helical" evidence="2">
    <location>
        <begin position="30"/>
        <end position="50"/>
    </location>
</feature>
<feature type="topological domain" description="Lumenal" evidence="7">
    <location>
        <begin position="51"/>
        <end position="76"/>
    </location>
</feature>
<feature type="transmembrane region" description="Helical" evidence="2">
    <location>
        <begin position="77"/>
        <end position="97"/>
    </location>
</feature>
<feature type="topological domain" description="Cytoplasmic" evidence="7">
    <location>
        <begin position="98"/>
        <end position="121"/>
    </location>
</feature>
<feature type="transmembrane region" description="Helical" evidence="2">
    <location>
        <begin position="122"/>
        <end position="142"/>
    </location>
</feature>
<feature type="topological domain" description="Lumenal" evidence="7">
    <location>
        <begin position="143"/>
        <end position="159"/>
    </location>
</feature>
<feature type="transmembrane region" description="Helical" evidence="2">
    <location>
        <begin position="160"/>
        <end position="180"/>
    </location>
</feature>
<feature type="topological domain" description="Cytoplasmic" evidence="7">
    <location>
        <begin position="181"/>
        <end position="192"/>
    </location>
</feature>
<feature type="transmembrane region" description="Helical" evidence="2">
    <location>
        <begin position="193"/>
        <end position="213"/>
    </location>
</feature>
<feature type="topological domain" description="Lumenal" evidence="7">
    <location>
        <begin position="214"/>
        <end position="217"/>
    </location>
</feature>
<feature type="transmembrane region" description="Helical" evidence="2">
    <location>
        <begin position="218"/>
        <end position="238"/>
    </location>
</feature>
<feature type="topological domain" description="Cytoplasmic" evidence="7">
    <location>
        <begin position="239"/>
        <end position="251"/>
    </location>
</feature>
<feature type="transmembrane region" description="Helical" evidence="2">
    <location>
        <begin position="252"/>
        <end position="272"/>
    </location>
</feature>
<feature type="topological domain" description="Lumenal" evidence="7">
    <location>
        <begin position="273"/>
        <end position="297"/>
    </location>
</feature>
<feature type="transmembrane region" description="Helical" evidence="2">
    <location>
        <begin position="298"/>
        <end position="318"/>
    </location>
</feature>
<feature type="topological domain" description="Cytoplasmic" evidence="7">
    <location>
        <begin position="319"/>
        <end position="374"/>
    </location>
</feature>
<feature type="domain" description="TLC" evidence="3">
    <location>
        <begin position="117"/>
        <end position="326"/>
    </location>
</feature>
<feature type="region of interest" description="Disordered" evidence="4">
    <location>
        <begin position="333"/>
        <end position="374"/>
    </location>
</feature>
<feature type="compositionally biased region" description="Basic residues" evidence="4">
    <location>
        <begin position="334"/>
        <end position="347"/>
    </location>
</feature>
<feature type="compositionally biased region" description="Polar residues" evidence="4">
    <location>
        <begin position="352"/>
        <end position="363"/>
    </location>
</feature>
<feature type="modified residue" description="Phosphoserine" evidence="9 10">
    <location>
        <position position="365"/>
    </location>
</feature>
<feature type="glycosylation site" description="N-linked (GlcNAc...) asparagine" evidence="5">
    <location>
        <position position="56"/>
    </location>
</feature>
<feature type="mutagenesis site" description="Abolishes glycosylation." evidence="5">
    <original>N</original>
    <variation>Q</variation>
    <location>
        <position position="56"/>
    </location>
</feature>
<feature type="mutagenesis site" description="No effect on glycosylation; when associated with Q-355." evidence="5">
    <original>N</original>
    <variation>Q</variation>
    <location>
        <position position="120"/>
    </location>
</feature>
<feature type="mutagenesis site" description="No effect on glycosylation; when associated with Q-120." evidence="5">
    <original>N</original>
    <variation>Q</variation>
    <location>
        <position position="355"/>
    </location>
</feature>
<organism>
    <name type="scientific">Mus musculus</name>
    <name type="common">Mouse</name>
    <dbReference type="NCBI Taxonomy" id="10090"/>
    <lineage>
        <taxon>Eukaryota</taxon>
        <taxon>Metazoa</taxon>
        <taxon>Chordata</taxon>
        <taxon>Craniata</taxon>
        <taxon>Vertebrata</taxon>
        <taxon>Euteleostomi</taxon>
        <taxon>Mammalia</taxon>
        <taxon>Eutheria</taxon>
        <taxon>Euarchontoglires</taxon>
        <taxon>Glires</taxon>
        <taxon>Rodentia</taxon>
        <taxon>Myomorpha</taxon>
        <taxon>Muroidea</taxon>
        <taxon>Muridae</taxon>
        <taxon>Murinae</taxon>
        <taxon>Mus</taxon>
        <taxon>Mus</taxon>
    </lineage>
</organism>
<proteinExistence type="evidence at protein level"/>
<reference key="1">
    <citation type="submission" date="2001-04" db="EMBL/GenBank/DDBJ databases">
        <authorList>
            <person name="Hartmann E."/>
        </authorList>
    </citation>
    <scope>NUCLEOTIDE SEQUENCE [MRNA]</scope>
</reference>
<reference key="2">
    <citation type="journal article" date="2005" name="Science">
        <title>The transcriptional landscape of the mammalian genome.</title>
        <authorList>
            <person name="Carninci P."/>
            <person name="Kasukawa T."/>
            <person name="Katayama S."/>
            <person name="Gough J."/>
            <person name="Frith M.C."/>
            <person name="Maeda N."/>
            <person name="Oyama R."/>
            <person name="Ravasi T."/>
            <person name="Lenhard B."/>
            <person name="Wells C."/>
            <person name="Kodzius R."/>
            <person name="Shimokawa K."/>
            <person name="Bajic V.B."/>
            <person name="Brenner S.E."/>
            <person name="Batalov S."/>
            <person name="Forrest A.R."/>
            <person name="Zavolan M."/>
            <person name="Davis M.J."/>
            <person name="Wilming L.G."/>
            <person name="Aidinis V."/>
            <person name="Allen J.E."/>
            <person name="Ambesi-Impiombato A."/>
            <person name="Apweiler R."/>
            <person name="Aturaliya R.N."/>
            <person name="Bailey T.L."/>
            <person name="Bansal M."/>
            <person name="Baxter L."/>
            <person name="Beisel K.W."/>
            <person name="Bersano T."/>
            <person name="Bono H."/>
            <person name="Chalk A.M."/>
            <person name="Chiu K.P."/>
            <person name="Choudhary V."/>
            <person name="Christoffels A."/>
            <person name="Clutterbuck D.R."/>
            <person name="Crowe M.L."/>
            <person name="Dalla E."/>
            <person name="Dalrymple B.P."/>
            <person name="de Bono B."/>
            <person name="Della Gatta G."/>
            <person name="di Bernardo D."/>
            <person name="Down T."/>
            <person name="Engstrom P."/>
            <person name="Fagiolini M."/>
            <person name="Faulkner G."/>
            <person name="Fletcher C.F."/>
            <person name="Fukushima T."/>
            <person name="Furuno M."/>
            <person name="Futaki S."/>
            <person name="Gariboldi M."/>
            <person name="Georgii-Hemming P."/>
            <person name="Gingeras T.R."/>
            <person name="Gojobori T."/>
            <person name="Green R.E."/>
            <person name="Gustincich S."/>
            <person name="Harbers M."/>
            <person name="Hayashi Y."/>
            <person name="Hensch T.K."/>
            <person name="Hirokawa N."/>
            <person name="Hill D."/>
            <person name="Huminiecki L."/>
            <person name="Iacono M."/>
            <person name="Ikeo K."/>
            <person name="Iwama A."/>
            <person name="Ishikawa T."/>
            <person name="Jakt M."/>
            <person name="Kanapin A."/>
            <person name="Katoh M."/>
            <person name="Kawasawa Y."/>
            <person name="Kelso J."/>
            <person name="Kitamura H."/>
            <person name="Kitano H."/>
            <person name="Kollias G."/>
            <person name="Krishnan S.P."/>
            <person name="Kruger A."/>
            <person name="Kummerfeld S.K."/>
            <person name="Kurochkin I.V."/>
            <person name="Lareau L.F."/>
            <person name="Lazarevic D."/>
            <person name="Lipovich L."/>
            <person name="Liu J."/>
            <person name="Liuni S."/>
            <person name="McWilliam S."/>
            <person name="Madan Babu M."/>
            <person name="Madera M."/>
            <person name="Marchionni L."/>
            <person name="Matsuda H."/>
            <person name="Matsuzawa S."/>
            <person name="Miki H."/>
            <person name="Mignone F."/>
            <person name="Miyake S."/>
            <person name="Morris K."/>
            <person name="Mottagui-Tabar S."/>
            <person name="Mulder N."/>
            <person name="Nakano N."/>
            <person name="Nakauchi H."/>
            <person name="Ng P."/>
            <person name="Nilsson R."/>
            <person name="Nishiguchi S."/>
            <person name="Nishikawa S."/>
            <person name="Nori F."/>
            <person name="Ohara O."/>
            <person name="Okazaki Y."/>
            <person name="Orlando V."/>
            <person name="Pang K.C."/>
            <person name="Pavan W.J."/>
            <person name="Pavesi G."/>
            <person name="Pesole G."/>
            <person name="Petrovsky N."/>
            <person name="Piazza S."/>
            <person name="Reed J."/>
            <person name="Reid J.F."/>
            <person name="Ring B.Z."/>
            <person name="Ringwald M."/>
            <person name="Rost B."/>
            <person name="Ruan Y."/>
            <person name="Salzberg S.L."/>
            <person name="Sandelin A."/>
            <person name="Schneider C."/>
            <person name="Schoenbach C."/>
            <person name="Sekiguchi K."/>
            <person name="Semple C.A."/>
            <person name="Seno S."/>
            <person name="Sessa L."/>
            <person name="Sheng Y."/>
            <person name="Shibata Y."/>
            <person name="Shimada H."/>
            <person name="Shimada K."/>
            <person name="Silva D."/>
            <person name="Sinclair B."/>
            <person name="Sperling S."/>
            <person name="Stupka E."/>
            <person name="Sugiura K."/>
            <person name="Sultana R."/>
            <person name="Takenaka Y."/>
            <person name="Taki K."/>
            <person name="Tammoja K."/>
            <person name="Tan S.L."/>
            <person name="Tang S."/>
            <person name="Taylor M.S."/>
            <person name="Tegner J."/>
            <person name="Teichmann S.A."/>
            <person name="Ueda H.R."/>
            <person name="van Nimwegen E."/>
            <person name="Verardo R."/>
            <person name="Wei C.L."/>
            <person name="Yagi K."/>
            <person name="Yamanishi H."/>
            <person name="Zabarovsky E."/>
            <person name="Zhu S."/>
            <person name="Zimmer A."/>
            <person name="Hide W."/>
            <person name="Bult C."/>
            <person name="Grimmond S.M."/>
            <person name="Teasdale R.D."/>
            <person name="Liu E.T."/>
            <person name="Brusic V."/>
            <person name="Quackenbush J."/>
            <person name="Wahlestedt C."/>
            <person name="Mattick J.S."/>
            <person name="Hume D.A."/>
            <person name="Kai C."/>
            <person name="Sasaki D."/>
            <person name="Tomaru Y."/>
            <person name="Fukuda S."/>
            <person name="Kanamori-Katayama M."/>
            <person name="Suzuki M."/>
            <person name="Aoki J."/>
            <person name="Arakawa T."/>
            <person name="Iida J."/>
            <person name="Imamura K."/>
            <person name="Itoh M."/>
            <person name="Kato T."/>
            <person name="Kawaji H."/>
            <person name="Kawagashira N."/>
            <person name="Kawashima T."/>
            <person name="Kojima M."/>
            <person name="Kondo S."/>
            <person name="Konno H."/>
            <person name="Nakano K."/>
            <person name="Ninomiya N."/>
            <person name="Nishio T."/>
            <person name="Okada M."/>
            <person name="Plessy C."/>
            <person name="Shibata K."/>
            <person name="Shiraki T."/>
            <person name="Suzuki S."/>
            <person name="Tagami M."/>
            <person name="Waki K."/>
            <person name="Watahiki A."/>
            <person name="Okamura-Oho Y."/>
            <person name="Suzuki H."/>
            <person name="Kawai J."/>
            <person name="Hayashizaki Y."/>
        </authorList>
    </citation>
    <scope>NUCLEOTIDE SEQUENCE [LARGE SCALE MRNA]</scope>
    <source>
        <strain>NOD</strain>
        <tissue>Thymus</tissue>
    </source>
</reference>
<reference key="3">
    <citation type="journal article" date="2004" name="Genome Res.">
        <title>The status, quality, and expansion of the NIH full-length cDNA project: the Mammalian Gene Collection (MGC).</title>
        <authorList>
            <consortium name="The MGC Project Team"/>
        </authorList>
    </citation>
    <scope>NUCLEOTIDE SEQUENCE [LARGE SCALE MRNA]</scope>
</reference>
<reference key="4">
    <citation type="journal article" date="2007" name="Proc. Natl. Acad. Sci. U.S.A.">
        <title>Large-scale phosphorylation analysis of mouse liver.</title>
        <authorList>
            <person name="Villen J."/>
            <person name="Beausoleil S.A."/>
            <person name="Gerber S.A."/>
            <person name="Gygi S.P."/>
        </authorList>
    </citation>
    <scope>PHOSPHORYLATION [LARGE SCALE ANALYSIS] AT SER-365</scope>
    <scope>IDENTIFICATION BY MASS SPECTROMETRY [LARGE SCALE ANALYSIS]</scope>
    <source>
        <tissue>Liver</tissue>
    </source>
</reference>
<reference key="5">
    <citation type="journal article" date="2010" name="Cell">
        <title>A tissue-specific atlas of mouse protein phosphorylation and expression.</title>
        <authorList>
            <person name="Huttlin E.L."/>
            <person name="Jedrychowski M.P."/>
            <person name="Elias J.E."/>
            <person name="Goswami T."/>
            <person name="Rad R."/>
            <person name="Beausoleil S.A."/>
            <person name="Villen J."/>
            <person name="Haas W."/>
            <person name="Sowa M.E."/>
            <person name="Gygi S.P."/>
        </authorList>
    </citation>
    <scope>PHOSPHORYLATION [LARGE SCALE ANALYSIS] AT SER-365</scope>
    <scope>IDENTIFICATION BY MASS SPECTROMETRY [LARGE SCALE ANALYSIS]</scope>
    <source>
        <tissue>Heart</tissue>
        <tissue>Kidney</tissue>
        <tissue>Liver</tissue>
        <tissue>Lung</tissue>
        <tissue>Pancreas</tissue>
        <tissue>Spleen</tissue>
        <tissue>Testis</tissue>
    </source>
</reference>
<reference key="6">
    <citation type="journal article" date="2011" name="J. Mol. Biol.">
        <title>Membrane insertion and topology of the translocating chain-associating membrane protein (TRAM).</title>
        <authorList>
            <person name="Tamborero S."/>
            <person name="Vilar M."/>
            <person name="Martinez-Gil L."/>
            <person name="Johnson A.E."/>
            <person name="Mingarro I."/>
        </authorList>
    </citation>
    <scope>SUBCELLULAR LOCATION</scope>
    <scope>TOPOLOGY</scope>
    <scope>GLYCOSYLATION AT ASN-56</scope>
    <scope>MUTAGENESIS OF ASN-56; ASN-120 AND ASN-355</scope>
</reference>
<protein>
    <recommendedName>
        <fullName evidence="1">Translocating chain-associated membrane protein 1</fullName>
        <shortName evidence="1">Protein TRAM1</shortName>
    </recommendedName>
</protein>
<accession>Q91V04</accession>
<name>TRAM1_MOUSE</name>
<dbReference type="EMBL" id="AY029764">
    <property type="protein sequence ID" value="AAK38167.1"/>
    <property type="molecule type" value="mRNA"/>
</dbReference>
<dbReference type="EMBL" id="AK088814">
    <property type="protein sequence ID" value="BAC40590.1"/>
    <property type="molecule type" value="mRNA"/>
</dbReference>
<dbReference type="EMBL" id="BC012401">
    <property type="protein sequence ID" value="AAH12401.1"/>
    <property type="molecule type" value="mRNA"/>
</dbReference>
<dbReference type="CCDS" id="CCDS14822.1"/>
<dbReference type="RefSeq" id="NP_082449.1">
    <property type="nucleotide sequence ID" value="NM_028173.5"/>
</dbReference>
<dbReference type="SMR" id="Q91V04"/>
<dbReference type="BioGRID" id="215264">
    <property type="interactions" value="6"/>
</dbReference>
<dbReference type="FunCoup" id="Q91V04">
    <property type="interactions" value="1673"/>
</dbReference>
<dbReference type="STRING" id="10090.ENSMUSP00000027068"/>
<dbReference type="TCDB" id="3.A.5.9.1">
    <property type="family name" value="the general secretory pathway (sec) family"/>
</dbReference>
<dbReference type="GlyCosmos" id="Q91V04">
    <property type="glycosylation" value="1 site, No reported glycans"/>
</dbReference>
<dbReference type="GlyGen" id="Q91V04">
    <property type="glycosylation" value="2 sites, 1 N-linked glycan (1 site), 1 O-linked glycan (1 site)"/>
</dbReference>
<dbReference type="iPTMnet" id="Q91V04"/>
<dbReference type="PhosphoSitePlus" id="Q91V04"/>
<dbReference type="SwissPalm" id="Q91V04"/>
<dbReference type="jPOST" id="Q91V04"/>
<dbReference type="PaxDb" id="10090-ENSMUSP00000027068"/>
<dbReference type="ProteomicsDB" id="298208"/>
<dbReference type="Pumba" id="Q91V04"/>
<dbReference type="Antibodypedia" id="12213">
    <property type="antibodies" value="143 antibodies from 28 providers"/>
</dbReference>
<dbReference type="DNASU" id="72265"/>
<dbReference type="Ensembl" id="ENSMUST00000027068.11">
    <property type="protein sequence ID" value="ENSMUSP00000027068.5"/>
    <property type="gene ID" value="ENSMUSG00000025935.11"/>
</dbReference>
<dbReference type="GeneID" id="72265"/>
<dbReference type="KEGG" id="mmu:72265"/>
<dbReference type="UCSC" id="uc007ait.2">
    <property type="organism name" value="mouse"/>
</dbReference>
<dbReference type="AGR" id="MGI:1919515"/>
<dbReference type="CTD" id="23471"/>
<dbReference type="MGI" id="MGI:1919515">
    <property type="gene designation" value="Tram1"/>
</dbReference>
<dbReference type="VEuPathDB" id="HostDB:ENSMUSG00000025935"/>
<dbReference type="eggNOG" id="KOG1608">
    <property type="taxonomic scope" value="Eukaryota"/>
</dbReference>
<dbReference type="GeneTree" id="ENSGT00510000046470"/>
<dbReference type="HOGENOM" id="CLU_062830_0_0_1"/>
<dbReference type="InParanoid" id="Q91V04"/>
<dbReference type="OMA" id="CAVFFYF"/>
<dbReference type="OrthoDB" id="3053196at2759"/>
<dbReference type="PhylomeDB" id="Q91V04"/>
<dbReference type="TreeFam" id="TF314319"/>
<dbReference type="BioGRID-ORCS" id="72265">
    <property type="hits" value="1 hit in 78 CRISPR screens"/>
</dbReference>
<dbReference type="ChiTaRS" id="Tram1">
    <property type="organism name" value="mouse"/>
</dbReference>
<dbReference type="PRO" id="PR:Q91V04"/>
<dbReference type="Proteomes" id="UP000000589">
    <property type="component" value="Chromosome 1"/>
</dbReference>
<dbReference type="RNAct" id="Q91V04">
    <property type="molecule type" value="protein"/>
</dbReference>
<dbReference type="Bgee" id="ENSMUSG00000025935">
    <property type="expression patterns" value="Expressed in parotid gland and 258 other cell types or tissues"/>
</dbReference>
<dbReference type="ExpressionAtlas" id="Q91V04">
    <property type="expression patterns" value="baseline and differential"/>
</dbReference>
<dbReference type="GO" id="GO:0005789">
    <property type="term" value="C:endoplasmic reticulum membrane"/>
    <property type="evidence" value="ECO:0000314"/>
    <property type="project" value="UniProtKB"/>
</dbReference>
<dbReference type="GO" id="GO:0006613">
    <property type="term" value="P:cotranslational protein targeting to membrane"/>
    <property type="evidence" value="ECO:0000250"/>
    <property type="project" value="UniProtKB"/>
</dbReference>
<dbReference type="GO" id="GO:0045048">
    <property type="term" value="P:protein insertion into ER membrane"/>
    <property type="evidence" value="ECO:0000250"/>
    <property type="project" value="UniProtKB"/>
</dbReference>
<dbReference type="GO" id="GO:0006986">
    <property type="term" value="P:response to unfolded protein"/>
    <property type="evidence" value="ECO:0000250"/>
    <property type="project" value="UniProtKB"/>
</dbReference>
<dbReference type="GO" id="GO:0006616">
    <property type="term" value="P:SRP-dependent cotranslational protein targeting to membrane, translocation"/>
    <property type="evidence" value="ECO:0007669"/>
    <property type="project" value="InterPro"/>
</dbReference>
<dbReference type="InterPro" id="IPR006634">
    <property type="entry name" value="TLC-dom"/>
</dbReference>
<dbReference type="InterPro" id="IPR016447">
    <property type="entry name" value="Translocation_assoc_membrane"/>
</dbReference>
<dbReference type="PANTHER" id="PTHR12371:SF3">
    <property type="entry name" value="TRANSLOCATING CHAIN-ASSOCIATED MEMBRANE PROTEIN 1"/>
    <property type="match status" value="1"/>
</dbReference>
<dbReference type="PANTHER" id="PTHR12371">
    <property type="entry name" value="TRANSLOCATION ASSOCIATED MEMBRANE PROTEIN"/>
    <property type="match status" value="1"/>
</dbReference>
<dbReference type="Pfam" id="PF03798">
    <property type="entry name" value="TRAM_LAG1_CLN8"/>
    <property type="match status" value="1"/>
</dbReference>
<dbReference type="PIRSF" id="PIRSF005449">
    <property type="entry name" value="Translocation_assoc_membrane"/>
    <property type="match status" value="1"/>
</dbReference>
<dbReference type="SMART" id="SM00724">
    <property type="entry name" value="TLC"/>
    <property type="match status" value="1"/>
</dbReference>
<dbReference type="PROSITE" id="PS50922">
    <property type="entry name" value="TLC"/>
    <property type="match status" value="1"/>
</dbReference>